<protein>
    <recommendedName>
        <fullName evidence="1">Periplasmic nitrate reductase</fullName>
        <ecNumber evidence="1">1.9.6.1</ecNumber>
    </recommendedName>
</protein>
<keyword id="KW-0004">4Fe-4S</keyword>
<keyword id="KW-0249">Electron transport</keyword>
<keyword id="KW-0408">Iron</keyword>
<keyword id="KW-0411">Iron-sulfur</keyword>
<keyword id="KW-0479">Metal-binding</keyword>
<keyword id="KW-0500">Molybdenum</keyword>
<keyword id="KW-0534">Nitrate assimilation</keyword>
<keyword id="KW-0560">Oxidoreductase</keyword>
<keyword id="KW-0574">Periplasm</keyword>
<keyword id="KW-1185">Reference proteome</keyword>
<keyword id="KW-0732">Signal</keyword>
<keyword id="KW-0813">Transport</keyword>
<dbReference type="EC" id="1.9.6.1" evidence="1"/>
<dbReference type="EMBL" id="CP000462">
    <property type="protein sequence ID" value="ABK35881.1"/>
    <property type="molecule type" value="Genomic_DNA"/>
</dbReference>
<dbReference type="RefSeq" id="WP_011705481.1">
    <property type="nucleotide sequence ID" value="NC_008570.1"/>
</dbReference>
<dbReference type="RefSeq" id="YP_856122.1">
    <property type="nucleotide sequence ID" value="NC_008570.1"/>
</dbReference>
<dbReference type="SMR" id="A0KIM1"/>
<dbReference type="STRING" id="380703.AHA_1586"/>
<dbReference type="EnsemblBacteria" id="ABK35881">
    <property type="protein sequence ID" value="ABK35881"/>
    <property type="gene ID" value="AHA_1586"/>
</dbReference>
<dbReference type="GeneID" id="4486851"/>
<dbReference type="KEGG" id="aha:AHA_1586"/>
<dbReference type="PATRIC" id="fig|380703.7.peg.1598"/>
<dbReference type="eggNOG" id="COG0243">
    <property type="taxonomic scope" value="Bacteria"/>
</dbReference>
<dbReference type="HOGENOM" id="CLU_000422_13_4_6"/>
<dbReference type="OrthoDB" id="9810782at2"/>
<dbReference type="Proteomes" id="UP000000756">
    <property type="component" value="Chromosome"/>
</dbReference>
<dbReference type="GO" id="GO:0016020">
    <property type="term" value="C:membrane"/>
    <property type="evidence" value="ECO:0007669"/>
    <property type="project" value="TreeGrafter"/>
</dbReference>
<dbReference type="GO" id="GO:0009325">
    <property type="term" value="C:nitrate reductase complex"/>
    <property type="evidence" value="ECO:0007669"/>
    <property type="project" value="TreeGrafter"/>
</dbReference>
<dbReference type="GO" id="GO:0042597">
    <property type="term" value="C:periplasmic space"/>
    <property type="evidence" value="ECO:0007669"/>
    <property type="project" value="UniProtKB-SubCell"/>
</dbReference>
<dbReference type="GO" id="GO:0051539">
    <property type="term" value="F:4 iron, 4 sulfur cluster binding"/>
    <property type="evidence" value="ECO:0007669"/>
    <property type="project" value="UniProtKB-KW"/>
</dbReference>
<dbReference type="GO" id="GO:0009055">
    <property type="term" value="F:electron transfer activity"/>
    <property type="evidence" value="ECO:0007669"/>
    <property type="project" value="UniProtKB-UniRule"/>
</dbReference>
<dbReference type="GO" id="GO:0005506">
    <property type="term" value="F:iron ion binding"/>
    <property type="evidence" value="ECO:0007669"/>
    <property type="project" value="UniProtKB-UniRule"/>
</dbReference>
<dbReference type="GO" id="GO:0030151">
    <property type="term" value="F:molybdenum ion binding"/>
    <property type="evidence" value="ECO:0007669"/>
    <property type="project" value="InterPro"/>
</dbReference>
<dbReference type="GO" id="GO:0043546">
    <property type="term" value="F:molybdopterin cofactor binding"/>
    <property type="evidence" value="ECO:0007669"/>
    <property type="project" value="InterPro"/>
</dbReference>
<dbReference type="GO" id="GO:0050140">
    <property type="term" value="F:nitrate reductase (cytochrome) activity"/>
    <property type="evidence" value="ECO:0007669"/>
    <property type="project" value="UniProtKB-EC"/>
</dbReference>
<dbReference type="GO" id="GO:0045333">
    <property type="term" value="P:cellular respiration"/>
    <property type="evidence" value="ECO:0007669"/>
    <property type="project" value="UniProtKB-ARBA"/>
</dbReference>
<dbReference type="GO" id="GO:0006777">
    <property type="term" value="P:Mo-molybdopterin cofactor biosynthetic process"/>
    <property type="evidence" value="ECO:0007669"/>
    <property type="project" value="UniProtKB-UniRule"/>
</dbReference>
<dbReference type="GO" id="GO:0042128">
    <property type="term" value="P:nitrate assimilation"/>
    <property type="evidence" value="ECO:0007669"/>
    <property type="project" value="UniProtKB-UniRule"/>
</dbReference>
<dbReference type="CDD" id="cd02791">
    <property type="entry name" value="MopB_CT_Nitrate-R-NapA-like"/>
    <property type="match status" value="1"/>
</dbReference>
<dbReference type="CDD" id="cd02754">
    <property type="entry name" value="MopB_Nitrate-R-NapA-like"/>
    <property type="match status" value="1"/>
</dbReference>
<dbReference type="FunFam" id="2.40.40.20:FF:000005">
    <property type="entry name" value="Periplasmic nitrate reductase"/>
    <property type="match status" value="1"/>
</dbReference>
<dbReference type="Gene3D" id="2.40.40.20">
    <property type="match status" value="1"/>
</dbReference>
<dbReference type="Gene3D" id="3.30.200.210">
    <property type="match status" value="1"/>
</dbReference>
<dbReference type="Gene3D" id="3.40.50.740">
    <property type="match status" value="1"/>
</dbReference>
<dbReference type="Gene3D" id="3.40.228.10">
    <property type="entry name" value="Dimethylsulfoxide Reductase, domain 2"/>
    <property type="match status" value="1"/>
</dbReference>
<dbReference type="HAMAP" id="MF_01630">
    <property type="entry name" value="Nitrate_reduct_NapA"/>
    <property type="match status" value="1"/>
</dbReference>
<dbReference type="InterPro" id="IPR009010">
    <property type="entry name" value="Asp_de-COase-like_dom_sf"/>
</dbReference>
<dbReference type="InterPro" id="IPR041957">
    <property type="entry name" value="CT_Nitrate-R-NapA-like"/>
</dbReference>
<dbReference type="InterPro" id="IPR006657">
    <property type="entry name" value="MoPterin_dinucl-bd_dom"/>
</dbReference>
<dbReference type="InterPro" id="IPR006656">
    <property type="entry name" value="Mopterin_OxRdtase"/>
</dbReference>
<dbReference type="InterPro" id="IPR006963">
    <property type="entry name" value="Mopterin_OxRdtase_4Fe-4S_dom"/>
</dbReference>
<dbReference type="InterPro" id="IPR027467">
    <property type="entry name" value="MopterinOxRdtase_cofactor_BS"/>
</dbReference>
<dbReference type="InterPro" id="IPR010051">
    <property type="entry name" value="Periplasm_NO3_reductase_lsu"/>
</dbReference>
<dbReference type="InterPro" id="IPR050123">
    <property type="entry name" value="Prok_molybdopt-oxidoreductase"/>
</dbReference>
<dbReference type="InterPro" id="IPR006311">
    <property type="entry name" value="TAT_signal"/>
</dbReference>
<dbReference type="InterPro" id="IPR019546">
    <property type="entry name" value="TAT_signal_bac_arc"/>
</dbReference>
<dbReference type="NCBIfam" id="TIGR01706">
    <property type="entry name" value="NAPA"/>
    <property type="match status" value="1"/>
</dbReference>
<dbReference type="NCBIfam" id="NF010055">
    <property type="entry name" value="PRK13532.1"/>
    <property type="match status" value="1"/>
</dbReference>
<dbReference type="NCBIfam" id="TIGR01409">
    <property type="entry name" value="TAT_signal_seq"/>
    <property type="match status" value="1"/>
</dbReference>
<dbReference type="PANTHER" id="PTHR43105:SF11">
    <property type="entry name" value="PERIPLASMIC NITRATE REDUCTASE"/>
    <property type="match status" value="1"/>
</dbReference>
<dbReference type="PANTHER" id="PTHR43105">
    <property type="entry name" value="RESPIRATORY NITRATE REDUCTASE"/>
    <property type="match status" value="1"/>
</dbReference>
<dbReference type="Pfam" id="PF04879">
    <property type="entry name" value="Molybdop_Fe4S4"/>
    <property type="match status" value="1"/>
</dbReference>
<dbReference type="Pfam" id="PF00384">
    <property type="entry name" value="Molybdopterin"/>
    <property type="match status" value="1"/>
</dbReference>
<dbReference type="Pfam" id="PF01568">
    <property type="entry name" value="Molydop_binding"/>
    <property type="match status" value="1"/>
</dbReference>
<dbReference type="SMART" id="SM00926">
    <property type="entry name" value="Molybdop_Fe4S4"/>
    <property type="match status" value="1"/>
</dbReference>
<dbReference type="SUPFAM" id="SSF50692">
    <property type="entry name" value="ADC-like"/>
    <property type="match status" value="1"/>
</dbReference>
<dbReference type="SUPFAM" id="SSF53706">
    <property type="entry name" value="Formate dehydrogenase/DMSO reductase, domains 1-3"/>
    <property type="match status" value="1"/>
</dbReference>
<dbReference type="PROSITE" id="PS51669">
    <property type="entry name" value="4FE4S_MOW_BIS_MGD"/>
    <property type="match status" value="1"/>
</dbReference>
<dbReference type="PROSITE" id="PS00551">
    <property type="entry name" value="MOLYBDOPTERIN_PROK_1"/>
    <property type="match status" value="1"/>
</dbReference>
<dbReference type="PROSITE" id="PS51318">
    <property type="entry name" value="TAT"/>
    <property type="match status" value="1"/>
</dbReference>
<sequence>MKLSRRDFMKANAVAAAAAVAGVSAPTLAANLITSTDKTAITWDKAPCRFCGTGCSVLVGSQDGRVVATQGDPDAPVNRGLNCIKGYFLSKIMYGQDRLTQPMLRMTDGKFDKNGNFAPISWDQAFDIMAEKFKTTLKEKGPTAVGMFGSGQWTVWEGYAAAKLMKAGLRTNNLDPNARHCMASAVVGFMRTFGMDEPMGCYDDIEQADAFVLWGSNMAEMHPILWSRISDRRLSHQDVQVHVLSTFEHRSFELADNGMVFTPQTDLAILNYIANYIIQNDKVNWEFVNKHTQFRKGVTDIGYGLRPTNPLQQKAKNPDSGDSTPMSFDDFAKFVADYDLESVSKLSGVPKDKLEKLAQLYADPSKKVVSYWTMGFNQHTRGVWANNLCYNIHLLTGKISTPGSGPFSLTGQPSACGTAREVGTFAHRLPADMVVTEPKHRAIAEKIWKLPEGTIPEQVGYHAVLQNRMLKDGKLNAYWVMCNNNMQAGPNMNEEGLPGYRNPANFIVVSDPYPTVTAQAADLILPTAMWVEKEGAYGNAERRTQFWHQQVKPPEGAKSDLWQLMEFSKRFKVEEVWPAELIAKMPEVKGKTLFDVLYANGQVNQFPKEQSKGALNDEAEHFGFYVQKGLFEEYATFGRGHGHDLAPFDQYHEARGLRWPVVDGKETLWRYREGFDPYVKAGEGVRFYGKPDGKAVIFALPYEPAAEAPDKEYDMWLSTGRVLEHWHTGTMTRRVPELYRAFPDAVLFMHPEDAKARGVRRGEEVIVSSRRGEVKTRVETRGRNRPPKGLVFMPFFDASQLVNKLTLDATDPLSKETDYKKCAVKVVKA</sequence>
<proteinExistence type="inferred from homology"/>
<comment type="function">
    <text evidence="1">Catalytic subunit of the periplasmic nitrate reductase complex NapAB. Receives electrons from NapB and catalyzes the reduction of nitrate to nitrite.</text>
</comment>
<comment type="catalytic activity">
    <reaction evidence="1">
        <text>2 Fe(II)-[cytochrome] + nitrate + 2 H(+) = 2 Fe(III)-[cytochrome] + nitrite + H2O</text>
        <dbReference type="Rhea" id="RHEA:12909"/>
        <dbReference type="Rhea" id="RHEA-COMP:11777"/>
        <dbReference type="Rhea" id="RHEA-COMP:11778"/>
        <dbReference type="ChEBI" id="CHEBI:15377"/>
        <dbReference type="ChEBI" id="CHEBI:15378"/>
        <dbReference type="ChEBI" id="CHEBI:16301"/>
        <dbReference type="ChEBI" id="CHEBI:17632"/>
        <dbReference type="ChEBI" id="CHEBI:29033"/>
        <dbReference type="ChEBI" id="CHEBI:29034"/>
        <dbReference type="EC" id="1.9.6.1"/>
    </reaction>
</comment>
<comment type="cofactor">
    <cofactor evidence="1">
        <name>[4Fe-4S] cluster</name>
        <dbReference type="ChEBI" id="CHEBI:49883"/>
    </cofactor>
    <text evidence="1">Binds 1 [4Fe-4S] cluster.</text>
</comment>
<comment type="cofactor">
    <cofactor evidence="1">
        <name>Mo-bis(molybdopterin guanine dinucleotide)</name>
        <dbReference type="ChEBI" id="CHEBI:60539"/>
    </cofactor>
    <text evidence="1">Binds 1 molybdenum-bis(molybdopterin guanine dinucleotide) (Mo-bis-MGD) cofactor per subunit.</text>
</comment>
<comment type="subunit">
    <text evidence="1">Component of the periplasmic nitrate reductase NapAB complex composed of NapA and NapB.</text>
</comment>
<comment type="subcellular location">
    <subcellularLocation>
        <location evidence="1">Periplasm</location>
    </subcellularLocation>
</comment>
<comment type="PTM">
    <text evidence="1">Predicted to be exported by the Tat system. The position of the signal peptide cleavage has not been experimentally proven.</text>
</comment>
<comment type="similarity">
    <text evidence="1">Belongs to the prokaryotic molybdopterin-containing oxidoreductase family. NasA/NapA/NarB subfamily.</text>
</comment>
<gene>
    <name evidence="1" type="primary">napA</name>
    <name type="ordered locus">AHA_1586</name>
</gene>
<accession>A0KIM1</accession>
<reference key="1">
    <citation type="journal article" date="2006" name="J. Bacteriol.">
        <title>Genome sequence of Aeromonas hydrophila ATCC 7966T: jack of all trades.</title>
        <authorList>
            <person name="Seshadri R."/>
            <person name="Joseph S.W."/>
            <person name="Chopra A.K."/>
            <person name="Sha J."/>
            <person name="Shaw J."/>
            <person name="Graf J."/>
            <person name="Haft D.H."/>
            <person name="Wu M."/>
            <person name="Ren Q."/>
            <person name="Rosovitz M.J."/>
            <person name="Madupu R."/>
            <person name="Tallon L."/>
            <person name="Kim M."/>
            <person name="Jin S."/>
            <person name="Vuong H."/>
            <person name="Stine O.C."/>
            <person name="Ali A."/>
            <person name="Horneman A.J."/>
            <person name="Heidelberg J.F."/>
        </authorList>
    </citation>
    <scope>NUCLEOTIDE SEQUENCE [LARGE SCALE GENOMIC DNA]</scope>
    <source>
        <strain>ATCC 7966 / DSM 30187 / BCRC 13018 / CCUG 14551 / JCM 1027 / KCTC 2358 / NCIMB 9240 / NCTC 8049</strain>
    </source>
</reference>
<feature type="signal peptide" description="Tat-type signal" evidence="1">
    <location>
        <begin position="1"/>
        <end position="30"/>
    </location>
</feature>
<feature type="chain" id="PRO_1000069707" description="Periplasmic nitrate reductase" evidence="1">
    <location>
        <begin position="31"/>
        <end position="829"/>
    </location>
</feature>
<feature type="domain" description="4Fe-4S Mo/W bis-MGD-type" evidence="1">
    <location>
        <begin position="41"/>
        <end position="97"/>
    </location>
</feature>
<feature type="binding site" evidence="1">
    <location>
        <position position="48"/>
    </location>
    <ligand>
        <name>[4Fe-4S] cluster</name>
        <dbReference type="ChEBI" id="CHEBI:49883"/>
    </ligand>
</feature>
<feature type="binding site" evidence="1">
    <location>
        <position position="51"/>
    </location>
    <ligand>
        <name>[4Fe-4S] cluster</name>
        <dbReference type="ChEBI" id="CHEBI:49883"/>
    </ligand>
</feature>
<feature type="binding site" evidence="1">
    <location>
        <position position="55"/>
    </location>
    <ligand>
        <name>[4Fe-4S] cluster</name>
        <dbReference type="ChEBI" id="CHEBI:49883"/>
    </ligand>
</feature>
<feature type="binding site" evidence="1">
    <location>
        <position position="83"/>
    </location>
    <ligand>
        <name>[4Fe-4S] cluster</name>
        <dbReference type="ChEBI" id="CHEBI:49883"/>
    </ligand>
</feature>
<feature type="binding site" evidence="1">
    <location>
        <position position="85"/>
    </location>
    <ligand>
        <name>Mo-bis(molybdopterin guanine dinucleotide)</name>
        <dbReference type="ChEBI" id="CHEBI:60539"/>
    </ligand>
</feature>
<feature type="binding site" evidence="1">
    <location>
        <position position="152"/>
    </location>
    <ligand>
        <name>Mo-bis(molybdopterin guanine dinucleotide)</name>
        <dbReference type="ChEBI" id="CHEBI:60539"/>
    </ligand>
</feature>
<feature type="binding site" evidence="1">
    <location>
        <position position="177"/>
    </location>
    <ligand>
        <name>Mo-bis(molybdopterin guanine dinucleotide)</name>
        <dbReference type="ChEBI" id="CHEBI:60539"/>
    </ligand>
</feature>
<feature type="binding site" evidence="1">
    <location>
        <position position="181"/>
    </location>
    <ligand>
        <name>Mo-bis(molybdopterin guanine dinucleotide)</name>
        <dbReference type="ChEBI" id="CHEBI:60539"/>
    </ligand>
</feature>
<feature type="binding site" evidence="1">
    <location>
        <begin position="214"/>
        <end position="221"/>
    </location>
    <ligand>
        <name>Mo-bis(molybdopterin guanine dinucleotide)</name>
        <dbReference type="ChEBI" id="CHEBI:60539"/>
    </ligand>
</feature>
<feature type="binding site" evidence="1">
    <location>
        <begin position="245"/>
        <end position="249"/>
    </location>
    <ligand>
        <name>Mo-bis(molybdopterin guanine dinucleotide)</name>
        <dbReference type="ChEBI" id="CHEBI:60539"/>
    </ligand>
</feature>
<feature type="binding site" evidence="1">
    <location>
        <begin position="264"/>
        <end position="266"/>
    </location>
    <ligand>
        <name>Mo-bis(molybdopterin guanine dinucleotide)</name>
        <dbReference type="ChEBI" id="CHEBI:60539"/>
    </ligand>
</feature>
<feature type="binding site" evidence="1">
    <location>
        <position position="374"/>
    </location>
    <ligand>
        <name>Mo-bis(molybdopterin guanine dinucleotide)</name>
        <dbReference type="ChEBI" id="CHEBI:60539"/>
    </ligand>
</feature>
<feature type="binding site" evidence="1">
    <location>
        <position position="378"/>
    </location>
    <ligand>
        <name>Mo-bis(molybdopterin guanine dinucleotide)</name>
        <dbReference type="ChEBI" id="CHEBI:60539"/>
    </ligand>
</feature>
<feature type="binding site" evidence="1">
    <location>
        <position position="484"/>
    </location>
    <ligand>
        <name>Mo-bis(molybdopterin guanine dinucleotide)</name>
        <dbReference type="ChEBI" id="CHEBI:60539"/>
    </ligand>
</feature>
<feature type="binding site" evidence="1">
    <location>
        <begin position="510"/>
        <end position="511"/>
    </location>
    <ligand>
        <name>Mo-bis(molybdopterin guanine dinucleotide)</name>
        <dbReference type="ChEBI" id="CHEBI:60539"/>
    </ligand>
</feature>
<feature type="binding site" evidence="1">
    <location>
        <position position="533"/>
    </location>
    <ligand>
        <name>Mo-bis(molybdopterin guanine dinucleotide)</name>
        <dbReference type="ChEBI" id="CHEBI:60539"/>
    </ligand>
</feature>
<feature type="binding site" evidence="1">
    <location>
        <position position="560"/>
    </location>
    <ligand>
        <name>Mo-bis(molybdopterin guanine dinucleotide)</name>
        <dbReference type="ChEBI" id="CHEBI:60539"/>
    </ligand>
</feature>
<feature type="binding site" evidence="1">
    <location>
        <begin position="719"/>
        <end position="728"/>
    </location>
    <ligand>
        <name>Mo-bis(molybdopterin guanine dinucleotide)</name>
        <dbReference type="ChEBI" id="CHEBI:60539"/>
    </ligand>
</feature>
<feature type="binding site" evidence="1">
    <location>
        <position position="795"/>
    </location>
    <ligand>
        <name>substrate</name>
    </ligand>
</feature>
<feature type="binding site" evidence="1">
    <location>
        <position position="803"/>
    </location>
    <ligand>
        <name>Mo-bis(molybdopterin guanine dinucleotide)</name>
        <dbReference type="ChEBI" id="CHEBI:60539"/>
    </ligand>
</feature>
<feature type="binding site" evidence="1">
    <location>
        <position position="820"/>
    </location>
    <ligand>
        <name>Mo-bis(molybdopterin guanine dinucleotide)</name>
        <dbReference type="ChEBI" id="CHEBI:60539"/>
    </ligand>
</feature>
<evidence type="ECO:0000255" key="1">
    <source>
        <dbReference type="HAMAP-Rule" id="MF_01630"/>
    </source>
</evidence>
<name>NAPA_AERHH</name>
<organism>
    <name type="scientific">Aeromonas hydrophila subsp. hydrophila (strain ATCC 7966 / DSM 30187 / BCRC 13018 / CCUG 14551 / JCM 1027 / KCTC 2358 / NCIMB 9240 / NCTC 8049)</name>
    <dbReference type="NCBI Taxonomy" id="380703"/>
    <lineage>
        <taxon>Bacteria</taxon>
        <taxon>Pseudomonadati</taxon>
        <taxon>Pseudomonadota</taxon>
        <taxon>Gammaproteobacteria</taxon>
        <taxon>Aeromonadales</taxon>
        <taxon>Aeromonadaceae</taxon>
        <taxon>Aeromonas</taxon>
    </lineage>
</organism>